<reference key="1">
    <citation type="journal article" date="1993" name="Mol. Microbiol.">
        <title>Bacillus subtilis genome project: cloning and sequencing of the 97 kb region from 325 degrees to 333 degrees.</title>
        <authorList>
            <person name="Glaser P."/>
            <person name="Kunst F."/>
            <person name="Arnaud M."/>
            <person name="Coudart M.P."/>
            <person name="Gonzales W."/>
            <person name="Hullo M.-F."/>
            <person name="Ionescu M."/>
            <person name="Lubochinsky B."/>
            <person name="Marcelino L."/>
            <person name="Moszer I."/>
            <person name="Presecan E."/>
            <person name="Santana M."/>
            <person name="Schneider E."/>
            <person name="Schweizer J."/>
            <person name="Vertes A."/>
            <person name="Rapoport G."/>
            <person name="Danchin A."/>
        </authorList>
    </citation>
    <scope>NUCLEOTIDE SEQUENCE [GENOMIC DNA]</scope>
    <source>
        <strain>168</strain>
    </source>
</reference>
<reference key="2">
    <citation type="journal article" date="1997" name="Nature">
        <title>The complete genome sequence of the Gram-positive bacterium Bacillus subtilis.</title>
        <authorList>
            <person name="Kunst F."/>
            <person name="Ogasawara N."/>
            <person name="Moszer I."/>
            <person name="Albertini A.M."/>
            <person name="Alloni G."/>
            <person name="Azevedo V."/>
            <person name="Bertero M.G."/>
            <person name="Bessieres P."/>
            <person name="Bolotin A."/>
            <person name="Borchert S."/>
            <person name="Borriss R."/>
            <person name="Boursier L."/>
            <person name="Brans A."/>
            <person name="Braun M."/>
            <person name="Brignell S.C."/>
            <person name="Bron S."/>
            <person name="Brouillet S."/>
            <person name="Bruschi C.V."/>
            <person name="Caldwell B."/>
            <person name="Capuano V."/>
            <person name="Carter N.M."/>
            <person name="Choi S.-K."/>
            <person name="Codani J.-J."/>
            <person name="Connerton I.F."/>
            <person name="Cummings N.J."/>
            <person name="Daniel R.A."/>
            <person name="Denizot F."/>
            <person name="Devine K.M."/>
            <person name="Duesterhoeft A."/>
            <person name="Ehrlich S.D."/>
            <person name="Emmerson P.T."/>
            <person name="Entian K.-D."/>
            <person name="Errington J."/>
            <person name="Fabret C."/>
            <person name="Ferrari E."/>
            <person name="Foulger D."/>
            <person name="Fritz C."/>
            <person name="Fujita M."/>
            <person name="Fujita Y."/>
            <person name="Fuma S."/>
            <person name="Galizzi A."/>
            <person name="Galleron N."/>
            <person name="Ghim S.-Y."/>
            <person name="Glaser P."/>
            <person name="Goffeau A."/>
            <person name="Golightly E.J."/>
            <person name="Grandi G."/>
            <person name="Guiseppi G."/>
            <person name="Guy B.J."/>
            <person name="Haga K."/>
            <person name="Haiech J."/>
            <person name="Harwood C.R."/>
            <person name="Henaut A."/>
            <person name="Hilbert H."/>
            <person name="Holsappel S."/>
            <person name="Hosono S."/>
            <person name="Hullo M.-F."/>
            <person name="Itaya M."/>
            <person name="Jones L.-M."/>
            <person name="Joris B."/>
            <person name="Karamata D."/>
            <person name="Kasahara Y."/>
            <person name="Klaerr-Blanchard M."/>
            <person name="Klein C."/>
            <person name="Kobayashi Y."/>
            <person name="Koetter P."/>
            <person name="Koningstein G."/>
            <person name="Krogh S."/>
            <person name="Kumano M."/>
            <person name="Kurita K."/>
            <person name="Lapidus A."/>
            <person name="Lardinois S."/>
            <person name="Lauber J."/>
            <person name="Lazarevic V."/>
            <person name="Lee S.-M."/>
            <person name="Levine A."/>
            <person name="Liu H."/>
            <person name="Masuda S."/>
            <person name="Mauel C."/>
            <person name="Medigue C."/>
            <person name="Medina N."/>
            <person name="Mellado R.P."/>
            <person name="Mizuno M."/>
            <person name="Moestl D."/>
            <person name="Nakai S."/>
            <person name="Noback M."/>
            <person name="Noone D."/>
            <person name="O'Reilly M."/>
            <person name="Ogawa K."/>
            <person name="Ogiwara A."/>
            <person name="Oudega B."/>
            <person name="Park S.-H."/>
            <person name="Parro V."/>
            <person name="Pohl T.M."/>
            <person name="Portetelle D."/>
            <person name="Porwollik S."/>
            <person name="Prescott A.M."/>
            <person name="Presecan E."/>
            <person name="Pujic P."/>
            <person name="Purnelle B."/>
            <person name="Rapoport G."/>
            <person name="Rey M."/>
            <person name="Reynolds S."/>
            <person name="Rieger M."/>
            <person name="Rivolta C."/>
            <person name="Rocha E."/>
            <person name="Roche B."/>
            <person name="Rose M."/>
            <person name="Sadaie Y."/>
            <person name="Sato T."/>
            <person name="Scanlan E."/>
            <person name="Schleich S."/>
            <person name="Schroeter R."/>
            <person name="Scoffone F."/>
            <person name="Sekiguchi J."/>
            <person name="Sekowska A."/>
            <person name="Seror S.J."/>
            <person name="Serror P."/>
            <person name="Shin B.-S."/>
            <person name="Soldo B."/>
            <person name="Sorokin A."/>
            <person name="Tacconi E."/>
            <person name="Takagi T."/>
            <person name="Takahashi H."/>
            <person name="Takemaru K."/>
            <person name="Takeuchi M."/>
            <person name="Tamakoshi A."/>
            <person name="Tanaka T."/>
            <person name="Terpstra P."/>
            <person name="Tognoni A."/>
            <person name="Tosato V."/>
            <person name="Uchiyama S."/>
            <person name="Vandenbol M."/>
            <person name="Vannier F."/>
            <person name="Vassarotti A."/>
            <person name="Viari A."/>
            <person name="Wambutt R."/>
            <person name="Wedler E."/>
            <person name="Wedler H."/>
            <person name="Weitzenegger T."/>
            <person name="Winters P."/>
            <person name="Wipat A."/>
            <person name="Yamamoto H."/>
            <person name="Yamane K."/>
            <person name="Yasumoto K."/>
            <person name="Yata K."/>
            <person name="Yoshida K."/>
            <person name="Yoshikawa H.-F."/>
            <person name="Zumstein E."/>
            <person name="Yoshikawa H."/>
            <person name="Danchin A."/>
        </authorList>
    </citation>
    <scope>NUCLEOTIDE SEQUENCE [LARGE SCALE GENOMIC DNA]</scope>
    <source>
        <strain>168</strain>
    </source>
</reference>
<reference key="3">
    <citation type="journal article" date="2004" name="Mol. Microbiol.">
        <title>Two minimal Tat translocases in Bacillus.</title>
        <authorList>
            <person name="Jongbloed J.D.H."/>
            <person name="Grieger U."/>
            <person name="Antelmann H."/>
            <person name="Hecker M."/>
            <person name="Nijland R."/>
            <person name="Bron S."/>
            <person name="van Dijl J.M."/>
        </authorList>
    </citation>
    <scope>EXPORT VIA THE TAT-SYSTEM</scope>
    <scope>SUBCELLULAR LOCATION</scope>
</reference>
<reference key="4">
    <citation type="journal article" date="2006" name="J. Bacteriol.">
        <title>Role of the Fur regulon in iron transport in Bacillus subtilis.</title>
        <authorList>
            <person name="Ollinger J."/>
            <person name="Song K.-B."/>
            <person name="Antelmann H."/>
            <person name="Hecker M."/>
            <person name="Helmann J.D."/>
        </authorList>
    </citation>
    <scope>FUNCTION IN IRON UPTAKE</scope>
    <source>
        <strain>168 / CU1065</strain>
    </source>
</reference>
<reference key="5">
    <citation type="journal article" date="2013" name="Biochim. Biophys. Acta">
        <title>The Bacillus subtilis EfeUOB transporter is essential for high-affinity acquisition of ferrous and ferric iron.</title>
        <authorList>
            <person name="Miethke M."/>
            <person name="Monteferrante C.G."/>
            <person name="Marahiel M.A."/>
            <person name="van Dijl J.M."/>
        </authorList>
    </citation>
    <scope>FUNCTION</scope>
    <scope>CATALYTIC ACTIVITY</scope>
    <scope>COFACTOR</scope>
    <scope>BIOPHYSICOCHEMICAL PROPERTIES</scope>
    <scope>IDENTIFICATION IN THE EFEUOB/M COMPLEX</scope>
    <scope>SUBCELLULAR LOCATION</scope>
    <scope>DISRUPTION PHENOTYPE</scope>
</reference>
<reference evidence="13 14" key="6">
    <citation type="journal article" date="2020" name="Arch. Biochem. Biophys.">
        <title>Characterization of dye-decolorizing peroxidase from Bacillus subtilis.</title>
        <authorList>
            <person name="Dhankhar P."/>
            <person name="Dalal V."/>
            <person name="Mahto J.K."/>
            <person name="Gurjar B.R."/>
            <person name="Tomar S."/>
            <person name="Sharma A.K."/>
            <person name="Kumar P."/>
        </authorList>
    </citation>
    <scope>X-RAY CRYSTALLOGRAPHY (1.93 ANGSTROMS) OF 55-416 IN COMPLEX WITH HEME AND SYNTHETIC SUBSTRATES</scope>
    <scope>CATALYTIC ACTIVITY</scope>
    <scope>COFACTOR</scope>
    <scope>BIOTECHNOLOGY</scope>
</reference>
<reference evidence="15" key="7">
    <citation type="journal article" date="2023" name="Proteins">
        <title>Structural insights at acidic pH of dye-decolorizing peroxidase from Bacillus subtilis.</title>
        <authorList>
            <person name="Dhankhar P."/>
            <person name="Dalal V."/>
            <person name="Sharma A.K."/>
            <person name="Kumar P."/>
        </authorList>
    </citation>
    <scope>X-RAY CRYSTALLOGRAPHY (1.90 ANGSTROMS) OF 55-416 IN COMPLEX WITH HEME</scope>
    <scope>COFACTOR</scope>
    <scope>BIOTECHNOLOGY</scope>
</reference>
<gene>
    <name evidence="9" type="primary">efeB</name>
    <name evidence="10" type="synonym">DyP</name>
    <name type="synonym">efeN</name>
    <name type="synonym">ywbN</name>
    <name type="ordered locus">BSU38260</name>
    <name type="ORF">ipa-29d</name>
</gene>
<sequence>MSDEQKKPEQIHRRDILKWGAMAGAAVAIGASGLGGLAPLVQTAAKPSKKDEKEEEQIVPFYGKHQAGITTAHQTYVYFAALDVTAKDKSDIITLFRNWTSLTQMLTSGKKMSAEQRNQYLPPQDTGESADLSPSNLTVTFGFGPGFFEKDGKDRFGLKSKKPKHLAALPAMPNDNLDEKQGGGDICIQVCADDEQVAFHALRNLLNQAVGTCEVRFVNKGFLSGGKNGETPRNLFGFKDGTGNQSTKDDTLMNSIVWIQSGEPDWMTGGTYMAFRKIKMFLEVWDRSSLKDQEDTFGRRKSSGAPFGQKKETDPVKLNQIPSNSHVSLAKSTGKQILRRAFSYTEGLDPKTGYMDAGLLFISFQKNPDNQFIPMLKALSAKDALNEYTQTIGSALYACPGGCKKGEYIAQRLLES</sequence>
<evidence type="ECO:0000250" key="1">
    <source>
        <dbReference type="UniProtKB" id="P31545"/>
    </source>
</evidence>
<evidence type="ECO:0000255" key="2">
    <source>
        <dbReference type="PROSITE-ProRule" id="PRU00648"/>
    </source>
</evidence>
<evidence type="ECO:0000256" key="3">
    <source>
        <dbReference type="SAM" id="MobiDB-lite"/>
    </source>
</evidence>
<evidence type="ECO:0000269" key="4">
    <source>
    </source>
</evidence>
<evidence type="ECO:0000269" key="5">
    <source>
    </source>
</evidence>
<evidence type="ECO:0000269" key="6">
    <source>
    </source>
</evidence>
<evidence type="ECO:0000269" key="7">
    <source>
    </source>
</evidence>
<evidence type="ECO:0000269" key="8">
    <source>
    </source>
</evidence>
<evidence type="ECO:0000303" key="9">
    <source>
    </source>
</evidence>
<evidence type="ECO:0000303" key="10">
    <source>
    </source>
</evidence>
<evidence type="ECO:0000305" key="11"/>
<evidence type="ECO:0000305" key="12">
    <source>
    </source>
</evidence>
<evidence type="ECO:0007744" key="13">
    <source>
        <dbReference type="PDB" id="6KMM"/>
    </source>
</evidence>
<evidence type="ECO:0007744" key="14">
    <source>
        <dbReference type="PDB" id="6KMN"/>
    </source>
</evidence>
<evidence type="ECO:0007744" key="15">
    <source>
        <dbReference type="PDB" id="7E5Q"/>
    </source>
</evidence>
<evidence type="ECO:0007829" key="16">
    <source>
        <dbReference type="PDB" id="6KMN"/>
    </source>
</evidence>
<evidence type="ECO:0007829" key="17">
    <source>
        <dbReference type="PDB" id="7E5Q"/>
    </source>
</evidence>
<evidence type="ECO:0007829" key="18">
    <source>
        <dbReference type="PDB" id="7PL0"/>
    </source>
</evidence>
<keyword id="KW-0002">3D-structure</keyword>
<keyword id="KW-1003">Cell membrane</keyword>
<keyword id="KW-0349">Heme</keyword>
<keyword id="KW-0408">Iron</keyword>
<keyword id="KW-0456">Lyase</keyword>
<keyword id="KW-0472">Membrane</keyword>
<keyword id="KW-0479">Metal-binding</keyword>
<keyword id="KW-0560">Oxidoreductase</keyword>
<keyword id="KW-0575">Peroxidase</keyword>
<keyword id="KW-1185">Reference proteome</keyword>
<keyword id="KW-0964">Secreted</keyword>
<keyword id="KW-0732">Signal</keyword>
<feature type="signal peptide" description="Tat-type signal" evidence="2">
    <location>
        <begin position="1"/>
        <end position="28"/>
    </location>
</feature>
<feature type="chain" id="PRO_0000013735" description="Deferrochelatase">
    <location>
        <begin position="29"/>
        <end position="416"/>
    </location>
</feature>
<feature type="region of interest" description="Disordered" evidence="3">
    <location>
        <begin position="293"/>
        <end position="318"/>
    </location>
</feature>
<feature type="binding site" evidence="7 8 14 15">
    <location>
        <begin position="241"/>
        <end position="243"/>
    </location>
    <ligand>
        <name>heme b</name>
        <dbReference type="ChEBI" id="CHEBI:60344"/>
    </ligand>
</feature>
<feature type="binding site" description="proximal binding residue" evidence="7 8 13 14 15">
    <location>
        <position position="326"/>
    </location>
    <ligand>
        <name>heme b</name>
        <dbReference type="ChEBI" id="CHEBI:60344"/>
    </ligand>
    <ligandPart>
        <name>Fe</name>
        <dbReference type="ChEBI" id="CHEBI:18248"/>
    </ligandPart>
</feature>
<feature type="binding site" evidence="7 8 13 14 15">
    <location>
        <position position="339"/>
    </location>
    <ligand>
        <name>heme b</name>
        <dbReference type="ChEBI" id="CHEBI:60344"/>
    </ligand>
</feature>
<feature type="strand" evidence="17">
    <location>
        <begin position="62"/>
        <end position="65"/>
    </location>
</feature>
<feature type="strand" evidence="17">
    <location>
        <begin position="67"/>
        <end position="71"/>
    </location>
</feature>
<feature type="strand" evidence="17">
    <location>
        <begin position="75"/>
        <end position="84"/>
    </location>
</feature>
<feature type="helix" evidence="17">
    <location>
        <begin position="89"/>
        <end position="107"/>
    </location>
</feature>
<feature type="turn" evidence="17">
    <location>
        <begin position="128"/>
        <end position="131"/>
    </location>
</feature>
<feature type="strand" evidence="17">
    <location>
        <begin position="137"/>
        <end position="143"/>
    </location>
</feature>
<feature type="helix" evidence="17">
    <location>
        <begin position="145"/>
        <end position="148"/>
    </location>
</feature>
<feature type="helix" evidence="18">
    <location>
        <begin position="155"/>
        <end position="157"/>
    </location>
</feature>
<feature type="helix" evidence="17">
    <location>
        <begin position="159"/>
        <end position="161"/>
    </location>
</feature>
<feature type="helix" evidence="17">
    <location>
        <begin position="179"/>
        <end position="181"/>
    </location>
</feature>
<feature type="strand" evidence="17">
    <location>
        <begin position="185"/>
        <end position="194"/>
    </location>
</feature>
<feature type="helix" evidence="17">
    <location>
        <begin position="195"/>
        <end position="209"/>
    </location>
</feature>
<feature type="strand" evidence="17">
    <location>
        <begin position="213"/>
        <end position="222"/>
    </location>
</feature>
<feature type="strand" evidence="16">
    <location>
        <begin position="237"/>
        <end position="239"/>
    </location>
</feature>
<feature type="helix" evidence="17">
    <location>
        <begin position="250"/>
        <end position="256"/>
    </location>
</feature>
<feature type="strand" evidence="17">
    <location>
        <begin position="261"/>
        <end position="263"/>
    </location>
</feature>
<feature type="helix" evidence="17">
    <location>
        <begin position="265"/>
        <end position="267"/>
    </location>
</feature>
<feature type="strand" evidence="17">
    <location>
        <begin position="271"/>
        <end position="280"/>
    </location>
</feature>
<feature type="helix" evidence="17">
    <location>
        <begin position="282"/>
        <end position="287"/>
    </location>
</feature>
<feature type="helix" evidence="17">
    <location>
        <begin position="290"/>
        <end position="297"/>
    </location>
</feature>
<feature type="turn" evidence="17">
    <location>
        <begin position="301"/>
        <end position="303"/>
    </location>
</feature>
<feature type="helix" evidence="17">
    <location>
        <begin position="318"/>
        <end position="320"/>
    </location>
</feature>
<feature type="helix" evidence="17">
    <location>
        <begin position="326"/>
        <end position="332"/>
    </location>
</feature>
<feature type="strand" evidence="17">
    <location>
        <begin position="342"/>
        <end position="348"/>
    </location>
</feature>
<feature type="turn" evidence="17">
    <location>
        <begin position="350"/>
        <end position="352"/>
    </location>
</feature>
<feature type="strand" evidence="17">
    <location>
        <begin position="354"/>
        <end position="366"/>
    </location>
</feature>
<feature type="helix" evidence="17">
    <location>
        <begin position="368"/>
        <end position="371"/>
    </location>
</feature>
<feature type="helix" evidence="17">
    <location>
        <begin position="373"/>
        <end position="382"/>
    </location>
</feature>
<feature type="helix" evidence="17">
    <location>
        <begin position="384"/>
        <end position="387"/>
    </location>
</feature>
<feature type="strand" evidence="17">
    <location>
        <begin position="389"/>
        <end position="399"/>
    </location>
</feature>
<feature type="helix" evidence="17">
    <location>
        <begin position="411"/>
        <end position="414"/>
    </location>
</feature>
<name>EFEB_BACSU</name>
<accession>P39597</accession>
<comment type="function">
    <text evidence="1 5 6">Involved in the recovery of exogenous heme iron (By similarity). Extracts iron from heme while preserving the protoporphyrin ring intact (By similarity). Part of the iron transporter system efeUOB/M involved in iron import (PubMed:16672620, PubMed:23764491). Catalyzes the peroxide-mediated oxidation of Fe(2+) into Fe(3+); EfeM binds Fe(3+) and delivers it to the cell membrane permease EfeU (PubMed:23764491).</text>
</comment>
<comment type="catalytic activity">
    <reaction evidence="1">
        <text>heme b + 2 H(+) = protoporphyrin IX + Fe(2+)</text>
        <dbReference type="Rhea" id="RHEA:22584"/>
        <dbReference type="ChEBI" id="CHEBI:15378"/>
        <dbReference type="ChEBI" id="CHEBI:29033"/>
        <dbReference type="ChEBI" id="CHEBI:57306"/>
        <dbReference type="ChEBI" id="CHEBI:60344"/>
        <dbReference type="EC" id="4.98.1.1"/>
    </reaction>
    <physiologicalReaction direction="left-to-right" evidence="1">
        <dbReference type="Rhea" id="RHEA:22585"/>
    </physiologicalReaction>
</comment>
<comment type="catalytic activity">
    <reaction evidence="6">
        <text>2 Fe(2+) + H2O2 + 2 H(+) = 2 Fe(3+) + 2 H2O</text>
        <dbReference type="Rhea" id="RHEA:48712"/>
        <dbReference type="ChEBI" id="CHEBI:15377"/>
        <dbReference type="ChEBI" id="CHEBI:15378"/>
        <dbReference type="ChEBI" id="CHEBI:16240"/>
        <dbReference type="ChEBI" id="CHEBI:29033"/>
        <dbReference type="ChEBI" id="CHEBI:29034"/>
    </reaction>
</comment>
<comment type="cofactor">
    <cofactor evidence="6 7 8">
        <name>heme b</name>
        <dbReference type="ChEBI" id="CHEBI:60344"/>
    </cofactor>
    <text evidence="6 7 8">Binds 1 heme b (iron(II)-protoporphyrin IX) group non-covalently.</text>
</comment>
<comment type="biophysicochemical properties">
    <kinetics>
        <KM evidence="6">210 uM for Fe(2+) (at 30 degrees Celsius, pH 7.0 and in microaerobic conditions (1 ppm dissolved oxygen))</KM>
        <KM evidence="6">0.28 uM for H(2)O(2) (at 30 degrees Celsius, pH 7.0 and in microaerobic conditions (1 ppm dissolved oxygen))</KM>
        <KM evidence="6">180 uM for Fe(2+) (at 30 degrees Celsius, pH 7.0, in microaerobic conditions (1 ppm dissolved oxygen) and in presence of 50uM EfeM)</KM>
        <KM evidence="6">160 uM for Fe(2+) (at 30 degrees Celsius, pH 7.0, in microaerobic conditions (1 ppm dissolved oxygen) and in presence of 250uM EfeM)</KM>
        <text evidence="6">kcat is 0.25 sec(-1) with Fe(2+) as substrate (at 30 degrees Celsius, pH 7.0 and in microaerobic conditions (1 ppm dissolved oxygen)) (PubMed:23764491). kcat is 0.65 sec(-1) with Fe(2+) as substrate (at 30 degrees Celsius, pH 7.0, in microaerobic conditions (1 ppm dissolved oxygen) and in presence of 50uM EfeM) (PubMed:23764491). kcat is 0.93 sec(-1) with Fe(2+) as substrate (at 30 degrees Celsius, pH 7.0, in microaerobic conditions (1 ppm dissolved oxygen) and in presence of 50uM EfeM) (PubMed:23764491). kcat is 0.32 sec(-1) with H(2)O(2) as substrate (at 30 degrees Celsius, pH 7.0 and in microaerobic conditions (1 ppm dissolved oxygen)) (PubMed:23764491).</text>
    </kinetics>
</comment>
<comment type="subunit">
    <text evidence="6">Component of the iron transporter efeUOB/M complex composed of EfeU, EfeM and EfeB; EfeU is essential for the complex formation.</text>
</comment>
<comment type="subcellular location">
    <subcellularLocation>
        <location evidence="4">Secreted</location>
    </subcellularLocation>
    <subcellularLocation>
        <location evidence="6">Cell membrane</location>
        <topology evidence="11">Peripheral membrane protein</topology>
        <orientation evidence="11">Extracellular side</orientation>
    </subcellularLocation>
</comment>
<comment type="PTM">
    <text evidence="4">Exported by the Tat system. The position of the signal peptide cleavage has not been experimentally proven.</text>
</comment>
<comment type="disruption phenotype">
    <text evidence="6">Severe reduction in Fe(2+) uptake and in cell growth under anaerobic conditions but not in aerobic and microaerobic conditions.</text>
</comment>
<comment type="biotechnology">
    <text evidence="7 12">Catalyzes the peroxide-dependent oxidation of various industrial dyes contributing to their detoxification and thus can be used for the bioremediation of dye-contaminated wastewater.</text>
</comment>
<comment type="similarity">
    <text evidence="11">Belongs to the DyP-type peroxidase family.</text>
</comment>
<protein>
    <recommendedName>
        <fullName>Deferrochelatase</fullName>
        <ecNumber evidence="1">4.98.1.1</ecNumber>
    </recommendedName>
    <alternativeName>
        <fullName evidence="10">Dye-decolorizing peroxidase</fullName>
    </alternativeName>
    <alternativeName>
        <fullName>Peroxidase EfeB</fullName>
        <ecNumber evidence="6 7">1.11.1.-</ecNumber>
    </alternativeName>
</protein>
<organism>
    <name type="scientific">Bacillus subtilis (strain 168)</name>
    <dbReference type="NCBI Taxonomy" id="224308"/>
    <lineage>
        <taxon>Bacteria</taxon>
        <taxon>Bacillati</taxon>
        <taxon>Bacillota</taxon>
        <taxon>Bacilli</taxon>
        <taxon>Bacillales</taxon>
        <taxon>Bacillaceae</taxon>
        <taxon>Bacillus</taxon>
    </lineage>
</organism>
<proteinExistence type="evidence at protein level"/>
<dbReference type="EC" id="4.98.1.1" evidence="1"/>
<dbReference type="EC" id="1.11.1.-" evidence="6 7"/>
<dbReference type="EMBL" id="X73124">
    <property type="protein sequence ID" value="CAA51585.1"/>
    <property type="molecule type" value="Genomic_DNA"/>
</dbReference>
<dbReference type="EMBL" id="AL009126">
    <property type="protein sequence ID" value="CAB15852.1"/>
    <property type="molecule type" value="Genomic_DNA"/>
</dbReference>
<dbReference type="PIR" id="S39684">
    <property type="entry name" value="S39684"/>
</dbReference>
<dbReference type="RefSeq" id="NP_391705.1">
    <property type="nucleotide sequence ID" value="NC_000964.3"/>
</dbReference>
<dbReference type="RefSeq" id="WP_003243445.1">
    <property type="nucleotide sequence ID" value="NZ_OZ025638.1"/>
</dbReference>
<dbReference type="PDB" id="6KMM">
    <property type="method" value="X-ray"/>
    <property type="resolution" value="1.93 A"/>
    <property type="chains" value="A/B/C/D/E/F=55-416"/>
</dbReference>
<dbReference type="PDB" id="6KMN">
    <property type="method" value="X-ray"/>
    <property type="resolution" value="2.44 A"/>
    <property type="chains" value="A/B/C/D=55-416"/>
</dbReference>
<dbReference type="PDB" id="7DLK">
    <property type="method" value="X-ray"/>
    <property type="resolution" value="2.10 A"/>
    <property type="chains" value="A/B/C/D/E/F=55-416"/>
</dbReference>
<dbReference type="PDB" id="7E5Q">
    <property type="method" value="X-ray"/>
    <property type="resolution" value="1.90 A"/>
    <property type="chains" value="A/B=55-416"/>
</dbReference>
<dbReference type="PDB" id="7PKX">
    <property type="method" value="X-ray"/>
    <property type="resolution" value="2.49 A"/>
    <property type="chains" value="A/B=1-416"/>
</dbReference>
<dbReference type="PDB" id="7PL0">
    <property type="method" value="X-ray"/>
    <property type="resolution" value="2.10 A"/>
    <property type="chains" value="A/B/C/D=1-416"/>
</dbReference>
<dbReference type="PDBsum" id="6KMM"/>
<dbReference type="PDBsum" id="6KMN"/>
<dbReference type="PDBsum" id="7DLK"/>
<dbReference type="PDBsum" id="7E5Q"/>
<dbReference type="PDBsum" id="7PKX"/>
<dbReference type="PDBsum" id="7PL0"/>
<dbReference type="SMR" id="P39597"/>
<dbReference type="FunCoup" id="P39597">
    <property type="interactions" value="21"/>
</dbReference>
<dbReference type="STRING" id="224308.BSU38260"/>
<dbReference type="PeroxiBase" id="5874">
    <property type="entry name" value="BsDyPrx01"/>
</dbReference>
<dbReference type="jPOST" id="P39597"/>
<dbReference type="PaxDb" id="224308-BSU38260"/>
<dbReference type="EnsemblBacteria" id="CAB15852">
    <property type="protein sequence ID" value="CAB15852"/>
    <property type="gene ID" value="BSU_38260"/>
</dbReference>
<dbReference type="GeneID" id="937310"/>
<dbReference type="KEGG" id="bsu:BSU38260"/>
<dbReference type="PATRIC" id="fig|224308.179.peg.4142"/>
<dbReference type="eggNOG" id="COG2837">
    <property type="taxonomic scope" value="Bacteria"/>
</dbReference>
<dbReference type="InParanoid" id="P39597"/>
<dbReference type="OrthoDB" id="9781066at2"/>
<dbReference type="PhylomeDB" id="P39597"/>
<dbReference type="BioCyc" id="BSUB:BSU38260-MONOMER"/>
<dbReference type="Proteomes" id="UP000001570">
    <property type="component" value="Chromosome"/>
</dbReference>
<dbReference type="GO" id="GO:0005829">
    <property type="term" value="C:cytosol"/>
    <property type="evidence" value="ECO:0000318"/>
    <property type="project" value="GO_Central"/>
</dbReference>
<dbReference type="GO" id="GO:0005576">
    <property type="term" value="C:extracellular region"/>
    <property type="evidence" value="ECO:0007669"/>
    <property type="project" value="UniProtKB-SubCell"/>
</dbReference>
<dbReference type="GO" id="GO:0005886">
    <property type="term" value="C:plasma membrane"/>
    <property type="evidence" value="ECO:0007669"/>
    <property type="project" value="UniProtKB-SubCell"/>
</dbReference>
<dbReference type="GO" id="GO:0004325">
    <property type="term" value="F:ferrochelatase activity"/>
    <property type="evidence" value="ECO:0007669"/>
    <property type="project" value="RHEA"/>
</dbReference>
<dbReference type="GO" id="GO:0020037">
    <property type="term" value="F:heme binding"/>
    <property type="evidence" value="ECO:0000318"/>
    <property type="project" value="GO_Central"/>
</dbReference>
<dbReference type="GO" id="GO:0046872">
    <property type="term" value="F:metal ion binding"/>
    <property type="evidence" value="ECO:0007669"/>
    <property type="project" value="UniProtKB-KW"/>
</dbReference>
<dbReference type="GO" id="GO:0004601">
    <property type="term" value="F:peroxidase activity"/>
    <property type="evidence" value="ECO:0000318"/>
    <property type="project" value="GO_Central"/>
</dbReference>
<dbReference type="GO" id="GO:0033212">
    <property type="term" value="P:iron import into cell"/>
    <property type="evidence" value="ECO:0007669"/>
    <property type="project" value="InterPro"/>
</dbReference>
<dbReference type="InterPro" id="IPR011008">
    <property type="entry name" value="Dimeric_a/b-barrel"/>
</dbReference>
<dbReference type="InterPro" id="IPR048328">
    <property type="entry name" value="Dyp_perox_C"/>
</dbReference>
<dbReference type="InterPro" id="IPR048327">
    <property type="entry name" value="Dyp_perox_N"/>
</dbReference>
<dbReference type="InterPro" id="IPR006314">
    <property type="entry name" value="Dyp_peroxidase"/>
</dbReference>
<dbReference type="InterPro" id="IPR006313">
    <property type="entry name" value="EfeB/EfeN"/>
</dbReference>
<dbReference type="InterPro" id="IPR006311">
    <property type="entry name" value="TAT_signal"/>
</dbReference>
<dbReference type="InterPro" id="IPR019546">
    <property type="entry name" value="TAT_signal_bac_arc"/>
</dbReference>
<dbReference type="NCBIfam" id="TIGR01413">
    <property type="entry name" value="Dyp_perox_fam"/>
    <property type="match status" value="1"/>
</dbReference>
<dbReference type="NCBIfam" id="TIGR01412">
    <property type="entry name" value="tat_substr_1"/>
    <property type="match status" value="1"/>
</dbReference>
<dbReference type="PANTHER" id="PTHR30521:SF4">
    <property type="entry name" value="DEFERROCHELATASE"/>
    <property type="match status" value="1"/>
</dbReference>
<dbReference type="PANTHER" id="PTHR30521">
    <property type="entry name" value="DEFERROCHELATASE/PEROXIDASE"/>
    <property type="match status" value="1"/>
</dbReference>
<dbReference type="Pfam" id="PF20628">
    <property type="entry name" value="Dyp_perox_C"/>
    <property type="match status" value="1"/>
</dbReference>
<dbReference type="Pfam" id="PF04261">
    <property type="entry name" value="Dyp_perox_N"/>
    <property type="match status" value="1"/>
</dbReference>
<dbReference type="Pfam" id="PF10518">
    <property type="entry name" value="TAT_signal"/>
    <property type="match status" value="1"/>
</dbReference>
<dbReference type="SUPFAM" id="SSF54909">
    <property type="entry name" value="Dimeric alpha+beta barrel"/>
    <property type="match status" value="1"/>
</dbReference>
<dbReference type="PROSITE" id="PS51404">
    <property type="entry name" value="DYP_PEROXIDASE"/>
    <property type="match status" value="1"/>
</dbReference>
<dbReference type="PROSITE" id="PS51318">
    <property type="entry name" value="TAT"/>
    <property type="match status" value="1"/>
</dbReference>